<accession>Q6BKX6</accession>
<keyword id="KW-0496">Mitochondrion</keyword>
<keyword id="KW-1185">Reference proteome</keyword>
<keyword id="KW-0809">Transit peptide</keyword>
<protein>
    <recommendedName>
        <fullName>Altered inheritance of mitochondria protein 24, mitochondrial</fullName>
    </recommendedName>
</protein>
<feature type="transit peptide" description="Mitochondrion" evidence="2">
    <location>
        <begin position="1"/>
        <end position="25"/>
    </location>
</feature>
<feature type="chain" id="PRO_0000399577" description="Altered inheritance of mitochondria protein 24, mitochondrial">
    <location>
        <begin position="26"/>
        <end position="412"/>
    </location>
</feature>
<evidence type="ECO:0000250" key="1"/>
<evidence type="ECO:0000255" key="2"/>
<evidence type="ECO:0000305" key="3"/>
<gene>
    <name type="primary">AIM24</name>
    <name type="ordered locus">DEHA2F18106g</name>
</gene>
<proteinExistence type="inferred from homology"/>
<organism>
    <name type="scientific">Debaryomyces hansenii (strain ATCC 36239 / CBS 767 / BCRC 21394 / JCM 1990 / NBRC 0083 / IGC 2968)</name>
    <name type="common">Yeast</name>
    <name type="synonym">Torulaspora hansenii</name>
    <dbReference type="NCBI Taxonomy" id="284592"/>
    <lineage>
        <taxon>Eukaryota</taxon>
        <taxon>Fungi</taxon>
        <taxon>Dikarya</taxon>
        <taxon>Ascomycota</taxon>
        <taxon>Saccharomycotina</taxon>
        <taxon>Pichiomycetes</taxon>
        <taxon>Debaryomycetaceae</taxon>
        <taxon>Debaryomyces</taxon>
    </lineage>
</organism>
<comment type="subcellular location">
    <subcellularLocation>
        <location evidence="1">Mitochondrion</location>
    </subcellularLocation>
</comment>
<comment type="similarity">
    <text evidence="3">Belongs to the AIM24 family.</text>
</comment>
<name>AIM24_DEBHA</name>
<reference key="1">
    <citation type="journal article" date="2004" name="Nature">
        <title>Genome evolution in yeasts.</title>
        <authorList>
            <person name="Dujon B."/>
            <person name="Sherman D."/>
            <person name="Fischer G."/>
            <person name="Durrens P."/>
            <person name="Casaregola S."/>
            <person name="Lafontaine I."/>
            <person name="de Montigny J."/>
            <person name="Marck C."/>
            <person name="Neuveglise C."/>
            <person name="Talla E."/>
            <person name="Goffard N."/>
            <person name="Frangeul L."/>
            <person name="Aigle M."/>
            <person name="Anthouard V."/>
            <person name="Babour A."/>
            <person name="Barbe V."/>
            <person name="Barnay S."/>
            <person name="Blanchin S."/>
            <person name="Beckerich J.-M."/>
            <person name="Beyne E."/>
            <person name="Bleykasten C."/>
            <person name="Boisrame A."/>
            <person name="Boyer J."/>
            <person name="Cattolico L."/>
            <person name="Confanioleri F."/>
            <person name="de Daruvar A."/>
            <person name="Despons L."/>
            <person name="Fabre E."/>
            <person name="Fairhead C."/>
            <person name="Ferry-Dumazet H."/>
            <person name="Groppi A."/>
            <person name="Hantraye F."/>
            <person name="Hennequin C."/>
            <person name="Jauniaux N."/>
            <person name="Joyet P."/>
            <person name="Kachouri R."/>
            <person name="Kerrest A."/>
            <person name="Koszul R."/>
            <person name="Lemaire M."/>
            <person name="Lesur I."/>
            <person name="Ma L."/>
            <person name="Muller H."/>
            <person name="Nicaud J.-M."/>
            <person name="Nikolski M."/>
            <person name="Oztas S."/>
            <person name="Ozier-Kalogeropoulos O."/>
            <person name="Pellenz S."/>
            <person name="Potier S."/>
            <person name="Richard G.-F."/>
            <person name="Straub M.-L."/>
            <person name="Suleau A."/>
            <person name="Swennen D."/>
            <person name="Tekaia F."/>
            <person name="Wesolowski-Louvel M."/>
            <person name="Westhof E."/>
            <person name="Wirth B."/>
            <person name="Zeniou-Meyer M."/>
            <person name="Zivanovic Y."/>
            <person name="Bolotin-Fukuhara M."/>
            <person name="Thierry A."/>
            <person name="Bouchier C."/>
            <person name="Caudron B."/>
            <person name="Scarpelli C."/>
            <person name="Gaillardin C."/>
            <person name="Weissenbach J."/>
            <person name="Wincker P."/>
            <person name="Souciet J.-L."/>
        </authorList>
    </citation>
    <scope>NUCLEOTIDE SEQUENCE [LARGE SCALE GENOMIC DNA]</scope>
    <source>
        <strain>ATCC 36239 / CBS 767 / BCRC 21394 / JCM 1990 / NBRC 0083 / IGC 2968</strain>
    </source>
</reference>
<sequence>MKANIAMASKQLQFIRSLIISQPPTIALPNQSSNISKIENIKGNDLPNQKTLNDPEFQSLGQPASVLAINSPPSVPIYIRKNSLLSIYGIDNSFVNSIKGSVEFINPLKRFIYGGYVSKYQKIISTVPFSLLVSSSSKNFRLRTNRQKSFATLLLDGTNDWAVLNNTALQAYTGGTLNVSMFRIPKNISKTLASLLKITNATETGLFRWNNLGYALLTGRGQVGLVGNGAIYNINLKENEEVLISRKNLLSISVNGPYDLQNCIVKYSFPVTKPETGTIGSTKEAPVQLNKDDVIPANNFNHYWNIIKGYSRHIINFFKRSQRLTYNFLVGNEDFVRVIGPRNLLLQSNSVGSHSTSSSELPKPNLSNIKANIEKKSSDFLNYVTIEPGRGAVFKSTPNFRESVQKIEKKSS</sequence>
<dbReference type="EMBL" id="CR382138">
    <property type="protein sequence ID" value="CAG89528.2"/>
    <property type="molecule type" value="Genomic_DNA"/>
</dbReference>
<dbReference type="RefSeq" id="XP_461145.2">
    <property type="nucleotide sequence ID" value="XM_461145.1"/>
</dbReference>
<dbReference type="FunCoup" id="Q6BKX6">
    <property type="interactions" value="14"/>
</dbReference>
<dbReference type="GeneID" id="2904307"/>
<dbReference type="KEGG" id="dha:DEHA2F18106g"/>
<dbReference type="VEuPathDB" id="FungiDB:DEHA2F18106g"/>
<dbReference type="eggNOG" id="ENOG502RXC5">
    <property type="taxonomic scope" value="Eukaryota"/>
</dbReference>
<dbReference type="HOGENOM" id="CLU_040665_0_0_1"/>
<dbReference type="InParanoid" id="Q6BKX6"/>
<dbReference type="OMA" id="NGPYDLQ"/>
<dbReference type="OrthoDB" id="5295771at2759"/>
<dbReference type="Proteomes" id="UP000000599">
    <property type="component" value="Chromosome F"/>
</dbReference>
<dbReference type="GO" id="GO:0005743">
    <property type="term" value="C:mitochondrial inner membrane"/>
    <property type="evidence" value="ECO:0007669"/>
    <property type="project" value="TreeGrafter"/>
</dbReference>
<dbReference type="GO" id="GO:0007007">
    <property type="term" value="P:inner mitochondrial membrane organization"/>
    <property type="evidence" value="ECO:0007669"/>
    <property type="project" value="TreeGrafter"/>
</dbReference>
<dbReference type="Gene3D" id="3.60.160.10">
    <property type="entry name" value="Mitochondrial biogenesis AIM24"/>
    <property type="match status" value="1"/>
</dbReference>
<dbReference type="InterPro" id="IPR002838">
    <property type="entry name" value="AIM24"/>
</dbReference>
<dbReference type="InterPro" id="IPR036983">
    <property type="entry name" value="AIM24_sf"/>
</dbReference>
<dbReference type="PANTHER" id="PTHR36959">
    <property type="entry name" value="ALTERED INHERITANCE OF MITOCHONDRIA PROTEIN 24, MITOCHONDRIAL"/>
    <property type="match status" value="1"/>
</dbReference>
<dbReference type="PANTHER" id="PTHR36959:SF2">
    <property type="entry name" value="ALTERED INHERITANCE OF MITOCHONDRIA PROTEIN 24, MITOCHONDRIAL"/>
    <property type="match status" value="1"/>
</dbReference>
<dbReference type="Pfam" id="PF01987">
    <property type="entry name" value="AIM24"/>
    <property type="match status" value="1"/>
</dbReference>